<name>VP9_MYRV9</name>
<organism>
    <name type="scientific">Cryphonectria parasitica mycoreovirus 1 (strain 9B21)</name>
    <name type="common">CpMYRV-1</name>
    <dbReference type="NCBI Taxonomy" id="230407"/>
    <lineage>
        <taxon>Viruses</taxon>
        <taxon>Riboviria</taxon>
        <taxon>Orthornavirae</taxon>
        <taxon>Duplornaviricota</taxon>
        <taxon>Resentoviricetes</taxon>
        <taxon>Reovirales</taxon>
        <taxon>Spinareoviridae</taxon>
        <taxon>Mycoreovirus</taxon>
        <taxon>Mycoreovirus 1</taxon>
    </lineage>
</organism>
<gene>
    <name type="primary">S9</name>
</gene>
<accession>Q65YU7</accession>
<comment type="subcellular location">
    <subcellularLocation>
        <location evidence="3">Host membrane</location>
        <topology evidence="3">Single-pass membrane protein</topology>
    </subcellularLocation>
</comment>
<dbReference type="EMBL" id="AB179641">
    <property type="protein sequence ID" value="BAD51419.1"/>
    <property type="molecule type" value="Genomic_RNA"/>
</dbReference>
<dbReference type="RefSeq" id="YP_001936012.1">
    <property type="nucleotide sequence ID" value="NC_010751.1"/>
</dbReference>
<dbReference type="GeneID" id="6334551"/>
<dbReference type="KEGG" id="vg:6334551"/>
<dbReference type="Proteomes" id="UP000006719">
    <property type="component" value="Genome"/>
</dbReference>
<dbReference type="GO" id="GO:0033644">
    <property type="term" value="C:host cell membrane"/>
    <property type="evidence" value="ECO:0007669"/>
    <property type="project" value="UniProtKB-SubCell"/>
</dbReference>
<dbReference type="GO" id="GO:0016020">
    <property type="term" value="C:membrane"/>
    <property type="evidence" value="ECO:0007669"/>
    <property type="project" value="UniProtKB-KW"/>
</dbReference>
<feature type="chain" id="PRO_0000403431" description="Uncharacterized protein VP9">
    <location>
        <begin position="1"/>
        <end position="297"/>
    </location>
</feature>
<feature type="transmembrane region" description="Helical" evidence="1">
    <location>
        <begin position="191"/>
        <end position="211"/>
    </location>
</feature>
<feature type="region of interest" description="Disordered" evidence="2">
    <location>
        <begin position="275"/>
        <end position="297"/>
    </location>
</feature>
<feature type="compositionally biased region" description="Polar residues" evidence="2">
    <location>
        <begin position="275"/>
        <end position="287"/>
    </location>
</feature>
<feature type="compositionally biased region" description="Basic and acidic residues" evidence="2">
    <location>
        <begin position="288"/>
        <end position="297"/>
    </location>
</feature>
<protein>
    <recommendedName>
        <fullName>Uncharacterized protein VP9</fullName>
    </recommendedName>
</protein>
<evidence type="ECO:0000255" key="1"/>
<evidence type="ECO:0000256" key="2">
    <source>
        <dbReference type="SAM" id="MobiDB-lite"/>
    </source>
</evidence>
<evidence type="ECO:0000305" key="3"/>
<sequence length="297" mass="32881">MSFTVVGSNIYDTTLLMTRKGQNGAPDEVIPRPGFLTLLLNDIDSLRTRVELHNLIDNLNLATNEDYVKFAEYRTLFSQTTDMIRLAYTNGQPAVQTRATDSRTGSVFYANTLTGDKAGNLFRLLAPIAYRYLDVGLPRLFSYIHAQIGTTPAFRYNFDIQPIIKLAITNEPLDYGEWIGQEGIHELERNVMIILSCSNITILAVLSIVGLGVGSHIMTSAADQEAWVGSPFMLSTDNFGNARPFTAPNPSYAQTLRLPIPRIFSAPNRPVWVQSKTSETQSVSGSTHSDEKLTAPM</sequence>
<keyword id="KW-1043">Host membrane</keyword>
<keyword id="KW-0472">Membrane</keyword>
<keyword id="KW-1185">Reference proteome</keyword>
<keyword id="KW-0812">Transmembrane</keyword>
<keyword id="KW-1133">Transmembrane helix</keyword>
<organismHost>
    <name type="scientific">Cryphonectria parasitica</name>
    <name type="common">Chestnut blight fungus</name>
    <name type="synonym">Endothia parasitica</name>
    <dbReference type="NCBI Taxonomy" id="5116"/>
</organismHost>
<reference key="1">
    <citation type="journal article" date="2004" name="J. Gen. Virol.">
        <title>Complete genome sequence of Mycoreovirus-1/Cp9B21, a member of a novel genus within the family Reoviridae, isolated from the chestnut blight fungus Cryphonectria parasitica.</title>
        <authorList>
            <person name="Suzuki N."/>
            <person name="Supyani S."/>
            <person name="Maruyama K."/>
            <person name="Hillman B.I."/>
        </authorList>
    </citation>
    <scope>NUCLEOTIDE SEQUENCE [GENOMIC RNA]</scope>
</reference>
<proteinExistence type="predicted"/>